<protein>
    <recommendedName>
        <fullName evidence="1">Type 2 DNA topoisomerase 6 subunit B</fullName>
        <ecNumber evidence="1">5.6.2.2</ecNumber>
    </recommendedName>
    <alternativeName>
        <fullName evidence="1">Type II DNA topoisomerase VI subunit B</fullName>
        <shortName evidence="1">TopoVI-B</shortName>
    </alternativeName>
</protein>
<evidence type="ECO:0000255" key="1">
    <source>
        <dbReference type="HAMAP-Rule" id="MF_00322"/>
    </source>
</evidence>
<evidence type="ECO:0000269" key="2">
    <source>
    </source>
</evidence>
<feature type="chain" id="PRO_0000145463" description="Type 2 DNA topoisomerase 6 subunit B">
    <location>
        <begin position="1"/>
        <end position="621"/>
    </location>
</feature>
<feature type="binding site" evidence="1">
    <location>
        <position position="48"/>
    </location>
    <ligand>
        <name>ATP</name>
        <dbReference type="ChEBI" id="CHEBI:30616"/>
    </ligand>
</feature>
<feature type="binding site" evidence="1">
    <location>
        <position position="80"/>
    </location>
    <ligand>
        <name>ATP</name>
        <dbReference type="ChEBI" id="CHEBI:30616"/>
    </ligand>
</feature>
<feature type="binding site" evidence="1">
    <location>
        <begin position="101"/>
        <end position="102"/>
    </location>
    <ligand>
        <name>ATP</name>
        <dbReference type="ChEBI" id="CHEBI:30616"/>
    </ligand>
</feature>
<feature type="binding site" evidence="1">
    <location>
        <begin position="111"/>
        <end position="118"/>
    </location>
    <ligand>
        <name>ATP</name>
        <dbReference type="ChEBI" id="CHEBI:30616"/>
    </ligand>
</feature>
<feature type="binding site" evidence="1">
    <location>
        <position position="435"/>
    </location>
    <ligand>
        <name>ATP</name>
        <dbReference type="ChEBI" id="CHEBI:30616"/>
    </ligand>
</feature>
<name>TOP6B_METMA</name>
<organism>
    <name type="scientific">Methanosarcina mazei (strain ATCC BAA-159 / DSM 3647 / Goe1 / Go1 / JCM 11833 / OCM 88)</name>
    <name type="common">Methanosarcina frisia</name>
    <dbReference type="NCBI Taxonomy" id="192952"/>
    <lineage>
        <taxon>Archaea</taxon>
        <taxon>Methanobacteriati</taxon>
        <taxon>Methanobacteriota</taxon>
        <taxon>Stenosarchaea group</taxon>
        <taxon>Methanomicrobia</taxon>
        <taxon>Methanosarcinales</taxon>
        <taxon>Methanosarcinaceae</taxon>
        <taxon>Methanosarcina</taxon>
    </lineage>
</organism>
<sequence length="621" mass="68760">METPIAEELAKKQKSISVAEFFEKNRQILGFDSAPRSLITTVKEAVDNALDACEEAGILPDILVQVERTGPDYVTVIIEDNGPGIVREQIPKVFAKLLYGSRFHALKQSRGQQGIGISAAVLYAQMTAGRHTKILSKTSPTAPAHYYELMINTSTNEPDILVDEVRDWFRPHGTQIELEMRAAYVKGRRQSIYEYLKATAIVNPHARITLIDPDGNEEVFERATDKMPEPAEEILPHPEGIELGTLMKMLHYTERQKLAPFLRYSFCKIGLLTAEEICKAAGLDPEIDPHALGRHEARKLIEAFEKVKIMAPPTDCLSPIGEDLIYRGLEKETTVDFIATSTRKPAVYSGNPFVVEVGMAYGGNLPKEEKISIMRFANRVPLLYQQGGCVTTHAVEDIKWKQYGLNQPGGGIPVGPVILLIHVASINVPFTSESKDAIADIPVIKEEIDLAIKEVARKLKHYLSKQSNLKKRREKEIIITKVLPKLAAKVAHVLEKDVPDINPVVAKIMGNLLVHRVIKNNGDGTVDVAIKVKNFGTSAYSFRVHEMLPCKVSGAKPEPKVVTMGNDYDYVWDISASAGSSKVLSYKIESASEEELQKLPQLIVEGIEEELVTGAKAFKGV</sequence>
<proteinExistence type="evidence at protein level"/>
<comment type="function">
    <text evidence="1">Relaxes both positive and negative superturns and exhibits a strong decatenase activity.</text>
</comment>
<comment type="catalytic activity">
    <reaction evidence="1">
        <text>ATP-dependent breakage, passage and rejoining of double-stranded DNA.</text>
        <dbReference type="EC" id="5.6.2.2"/>
    </reaction>
</comment>
<comment type="subunit">
    <text evidence="1 2">Homodimer. Heterotetramer of two Top6A and two Top6B chains.</text>
</comment>
<comment type="interaction">
    <interactant intactId="EBI-9026766">
        <id>Q8PUB8</id>
    </interactant>
    <interactant intactId="EBI-9026768">
        <id>Q8PUB7</id>
        <label>top6A</label>
    </interactant>
    <organismsDiffer>false</organismsDiffer>
    <experiments>2</experiments>
</comment>
<comment type="similarity">
    <text evidence="1">Belongs to the TOP6B family.</text>
</comment>
<gene>
    <name evidence="1" type="primary">top6B</name>
    <name type="ordered locus">MM_2417</name>
</gene>
<dbReference type="EC" id="5.6.2.2" evidence="1"/>
<dbReference type="EMBL" id="AE008384">
    <property type="protein sequence ID" value="AAM32113.1"/>
    <property type="molecule type" value="Genomic_DNA"/>
</dbReference>
<dbReference type="RefSeq" id="WP_011034341.1">
    <property type="nucleotide sequence ID" value="NC_003901.1"/>
</dbReference>
<dbReference type="PDB" id="2Q2E">
    <property type="method" value="X-ray"/>
    <property type="resolution" value="4.00 A"/>
    <property type="chains" value="B=1-621"/>
</dbReference>
<dbReference type="PDBsum" id="2Q2E"/>
<dbReference type="SMR" id="Q8PUB8"/>
<dbReference type="DIP" id="DIP-29415N"/>
<dbReference type="IntAct" id="Q8PUB8">
    <property type="interactions" value="1"/>
</dbReference>
<dbReference type="KEGG" id="mma:MM_2417"/>
<dbReference type="PATRIC" id="fig|192952.21.peg.2765"/>
<dbReference type="eggNOG" id="arCOG01165">
    <property type="taxonomic scope" value="Archaea"/>
</dbReference>
<dbReference type="HOGENOM" id="CLU_006403_0_0_2"/>
<dbReference type="BRENDA" id="5.6.2.2">
    <property type="organism ID" value="3270"/>
</dbReference>
<dbReference type="EvolutionaryTrace" id="Q8PUB8"/>
<dbReference type="Proteomes" id="UP000000595">
    <property type="component" value="Chromosome"/>
</dbReference>
<dbReference type="GO" id="GO:0005524">
    <property type="term" value="F:ATP binding"/>
    <property type="evidence" value="ECO:0007669"/>
    <property type="project" value="UniProtKB-UniRule"/>
</dbReference>
<dbReference type="GO" id="GO:0003677">
    <property type="term" value="F:DNA binding"/>
    <property type="evidence" value="ECO:0007669"/>
    <property type="project" value="UniProtKB-UniRule"/>
</dbReference>
<dbReference type="GO" id="GO:0003918">
    <property type="term" value="F:DNA topoisomerase type II (double strand cut, ATP-hydrolyzing) activity"/>
    <property type="evidence" value="ECO:0007669"/>
    <property type="project" value="UniProtKB-UniRule"/>
</dbReference>
<dbReference type="GO" id="GO:0006265">
    <property type="term" value="P:DNA topological change"/>
    <property type="evidence" value="ECO:0007669"/>
    <property type="project" value="UniProtKB-UniRule"/>
</dbReference>
<dbReference type="CDD" id="cd16933">
    <property type="entry name" value="HATPase_TopVIB-like"/>
    <property type="match status" value="1"/>
</dbReference>
<dbReference type="CDD" id="cd00823">
    <property type="entry name" value="TopoIIB_Trans"/>
    <property type="match status" value="1"/>
</dbReference>
<dbReference type="FunFam" id="1.10.8.50:FF:000016">
    <property type="entry name" value="Type 2 DNA topoisomerase 6 subunit B"/>
    <property type="match status" value="1"/>
</dbReference>
<dbReference type="FunFam" id="3.30.230.10:FF:000089">
    <property type="entry name" value="Type 2 DNA topoisomerase 6 subunit B"/>
    <property type="match status" value="1"/>
</dbReference>
<dbReference type="FunFam" id="3.30.565.10:FF:000062">
    <property type="entry name" value="Type 2 DNA topoisomerase 6 subunit B"/>
    <property type="match status" value="1"/>
</dbReference>
<dbReference type="Gene3D" id="1.10.8.50">
    <property type="match status" value="1"/>
</dbReference>
<dbReference type="Gene3D" id="2.60.40.2960">
    <property type="match status" value="1"/>
</dbReference>
<dbReference type="Gene3D" id="3.30.230.10">
    <property type="match status" value="1"/>
</dbReference>
<dbReference type="Gene3D" id="6.10.20.80">
    <property type="match status" value="1"/>
</dbReference>
<dbReference type="Gene3D" id="3.30.565.10">
    <property type="entry name" value="Histidine kinase-like ATPase, C-terminal domain"/>
    <property type="match status" value="1"/>
</dbReference>
<dbReference type="HAMAP" id="MF_00322">
    <property type="entry name" value="Top6B"/>
    <property type="match status" value="1"/>
</dbReference>
<dbReference type="InterPro" id="IPR036890">
    <property type="entry name" value="HATPase_C_sf"/>
</dbReference>
<dbReference type="InterPro" id="IPR020568">
    <property type="entry name" value="Ribosomal_Su5_D2-typ_SF"/>
</dbReference>
<dbReference type="InterPro" id="IPR010979">
    <property type="entry name" value="Ribosomal_uS13-like_H2TH"/>
</dbReference>
<dbReference type="InterPro" id="IPR014721">
    <property type="entry name" value="Ribsml_uS5_D2-typ_fold_subgr"/>
</dbReference>
<dbReference type="InterPro" id="IPR040494">
    <property type="entry name" value="Top6b_C"/>
</dbReference>
<dbReference type="InterPro" id="IPR005734">
    <property type="entry name" value="TopoVI_B"/>
</dbReference>
<dbReference type="InterPro" id="IPR015320">
    <property type="entry name" value="TopoVI_B_transducer"/>
</dbReference>
<dbReference type="NCBIfam" id="NF003218">
    <property type="entry name" value="PRK04184.1"/>
    <property type="match status" value="1"/>
</dbReference>
<dbReference type="NCBIfam" id="TIGR01052">
    <property type="entry name" value="top6b"/>
    <property type="match status" value="1"/>
</dbReference>
<dbReference type="PANTHER" id="PTHR48444">
    <property type="entry name" value="DNA TOPOISOMERASE 6 SUBUNIT B"/>
    <property type="match status" value="1"/>
</dbReference>
<dbReference type="PANTHER" id="PTHR48444:SF1">
    <property type="entry name" value="DNA TOPOISOMERASE 6 SUBUNIT B"/>
    <property type="match status" value="1"/>
</dbReference>
<dbReference type="Pfam" id="PF02518">
    <property type="entry name" value="HATPase_c"/>
    <property type="match status" value="1"/>
</dbReference>
<dbReference type="Pfam" id="PF18000">
    <property type="entry name" value="Top6b_C"/>
    <property type="match status" value="1"/>
</dbReference>
<dbReference type="Pfam" id="PF09239">
    <property type="entry name" value="Topo-VIb_trans"/>
    <property type="match status" value="1"/>
</dbReference>
<dbReference type="PIRSF" id="PIRSF006553">
    <property type="entry name" value="TopoVI_B"/>
    <property type="match status" value="1"/>
</dbReference>
<dbReference type="SMART" id="SM00387">
    <property type="entry name" value="HATPase_c"/>
    <property type="match status" value="1"/>
</dbReference>
<dbReference type="SUPFAM" id="SSF55874">
    <property type="entry name" value="ATPase domain of HSP90 chaperone/DNA topoisomerase II/histidine kinase"/>
    <property type="match status" value="1"/>
</dbReference>
<dbReference type="SUPFAM" id="SSF54211">
    <property type="entry name" value="Ribosomal protein S5 domain 2-like"/>
    <property type="match status" value="1"/>
</dbReference>
<dbReference type="SUPFAM" id="SSF46946">
    <property type="entry name" value="S13-like H2TH domain"/>
    <property type="match status" value="1"/>
</dbReference>
<keyword id="KW-0002">3D-structure</keyword>
<keyword id="KW-0067">ATP-binding</keyword>
<keyword id="KW-0238">DNA-binding</keyword>
<keyword id="KW-0413">Isomerase</keyword>
<keyword id="KW-0547">Nucleotide-binding</keyword>
<keyword id="KW-0799">Topoisomerase</keyword>
<accession>Q8PUB8</accession>
<reference key="1">
    <citation type="journal article" date="2002" name="J. Mol. Microbiol. Biotechnol.">
        <title>The genome of Methanosarcina mazei: evidence for lateral gene transfer between Bacteria and Archaea.</title>
        <authorList>
            <person name="Deppenmeier U."/>
            <person name="Johann A."/>
            <person name="Hartsch T."/>
            <person name="Merkl R."/>
            <person name="Schmitz R.A."/>
            <person name="Martinez-Arias R."/>
            <person name="Henne A."/>
            <person name="Wiezer A."/>
            <person name="Baeumer S."/>
            <person name="Jacobi C."/>
            <person name="Brueggemann H."/>
            <person name="Lienard T."/>
            <person name="Christmann A."/>
            <person name="Boemecke M."/>
            <person name="Steckel S."/>
            <person name="Bhattacharyya A."/>
            <person name="Lykidis A."/>
            <person name="Overbeek R."/>
            <person name="Klenk H.-P."/>
            <person name="Gunsalus R.P."/>
            <person name="Fritz H.-J."/>
            <person name="Gottschalk G."/>
        </authorList>
    </citation>
    <scope>NUCLEOTIDE SEQUENCE [LARGE SCALE GENOMIC DNA]</scope>
    <source>
        <strain>ATCC BAA-159 / DSM 3647 / Goe1 / Go1 / JCM 11833 / OCM 88</strain>
    </source>
</reference>
<reference key="2">
    <citation type="journal article" date="2007" name="Nat. Struct. Mol. Biol.">
        <title>Holoenzyme assembly and ATP-mediated conformational dynamics of topoisomerase VI.</title>
        <authorList>
            <person name="Corbett K.D."/>
            <person name="Benedetti P."/>
            <person name="Berger J.M."/>
        </authorList>
    </citation>
    <scope>X-RAY CRYSTALLOGRAPHY (4.0 ANGSTROMS) IN COMPLEX WITH TOP6A</scope>
    <scope>SUBUNIT</scope>
</reference>